<evidence type="ECO:0000255" key="1">
    <source>
        <dbReference type="HAMAP-Rule" id="MF_03154"/>
    </source>
</evidence>
<organism>
    <name type="scientific">Gallus gallus</name>
    <name type="common">Chicken</name>
    <dbReference type="NCBI Taxonomy" id="9031"/>
    <lineage>
        <taxon>Eukaryota</taxon>
        <taxon>Metazoa</taxon>
        <taxon>Chordata</taxon>
        <taxon>Craniata</taxon>
        <taxon>Vertebrata</taxon>
        <taxon>Euteleostomi</taxon>
        <taxon>Archelosauria</taxon>
        <taxon>Archosauria</taxon>
        <taxon>Dinosauria</taxon>
        <taxon>Saurischia</taxon>
        <taxon>Theropoda</taxon>
        <taxon>Coelurosauria</taxon>
        <taxon>Aves</taxon>
        <taxon>Neognathae</taxon>
        <taxon>Galloanserae</taxon>
        <taxon>Galliformes</taxon>
        <taxon>Phasianidae</taxon>
        <taxon>Phasianinae</taxon>
        <taxon>Gallus</taxon>
    </lineage>
</organism>
<protein>
    <recommendedName>
        <fullName evidence="1">Acireductone dioxygenase</fullName>
    </recommendedName>
    <alternativeName>
        <fullName evidence="1">Acireductone dioxygenase (Fe(2+)-requiring)</fullName>
        <shortName evidence="1">ARD'</shortName>
        <shortName evidence="1">Fe-ARD</shortName>
        <ecNumber evidence="1">1.13.11.54</ecNumber>
    </alternativeName>
    <alternativeName>
        <fullName evidence="1">Acireductone dioxygenase (Ni(2+)-requiring)</fullName>
        <shortName evidence="1">ARD</shortName>
        <shortName evidence="1">Ni-ARD</shortName>
        <ecNumber evidence="1">1.13.11.53</ecNumber>
    </alternativeName>
    <alternativeName>
        <fullName evidence="1">Membrane-type 1 matrix metalloproteinase cytoplasmic tail-binding protein 1</fullName>
        <shortName evidence="1">MTCBP-1</shortName>
    </alternativeName>
</protein>
<sequence length="180" mass="21674">MVEAWYMDESQEDQRAPHRLQPNRAVSLEQLRRLGVAYRRLDADNYETDPRLKEIREAENYSWMDIVTIHKDKLPNYEEKIKTFYEEHLHLDDEIRYILDGSGYFDVRDKDDKWIRISMEKGDMITLPAGIYHRFTLDENNYVKAMRLFVGEPVWTAYNRPADDFPARKQYMKFLAEEAQ</sequence>
<dbReference type="EC" id="1.13.11.54" evidence="1"/>
<dbReference type="EC" id="1.13.11.53" evidence="1"/>
<dbReference type="EMBL" id="AJ719891">
    <property type="protein sequence ID" value="CAG31550.1"/>
    <property type="molecule type" value="mRNA"/>
</dbReference>
<dbReference type="RefSeq" id="NP_001026260.1">
    <property type="nucleotide sequence ID" value="NM_001031089.2"/>
</dbReference>
<dbReference type="SMR" id="Q5ZL43"/>
<dbReference type="FunCoup" id="Q5ZL43">
    <property type="interactions" value="1480"/>
</dbReference>
<dbReference type="STRING" id="9031.ENSGALP00000043343"/>
<dbReference type="PaxDb" id="9031-ENSGALP00000043343"/>
<dbReference type="Ensembl" id="ENSGALT00010008062.1">
    <property type="protein sequence ID" value="ENSGALP00010004819.1"/>
    <property type="gene ID" value="ENSGALG00010003471.1"/>
</dbReference>
<dbReference type="GeneID" id="421918"/>
<dbReference type="KEGG" id="gga:421918"/>
<dbReference type="CTD" id="55256"/>
<dbReference type="VEuPathDB" id="HostDB:geneid_421918"/>
<dbReference type="eggNOG" id="KOG2107">
    <property type="taxonomic scope" value="Eukaryota"/>
</dbReference>
<dbReference type="GeneTree" id="ENSGT00390000008195"/>
<dbReference type="HOGENOM" id="CLU_090154_0_0_1"/>
<dbReference type="InParanoid" id="Q5ZL43"/>
<dbReference type="OMA" id="WYMDESQ"/>
<dbReference type="OrthoDB" id="1867259at2759"/>
<dbReference type="PhylomeDB" id="Q5ZL43"/>
<dbReference type="Reactome" id="R-GGA-1237112">
    <property type="pathway name" value="Methionine salvage pathway"/>
</dbReference>
<dbReference type="UniPathway" id="UPA00904">
    <property type="reaction ID" value="UER00878"/>
</dbReference>
<dbReference type="PRO" id="PR:Q5ZL43"/>
<dbReference type="Proteomes" id="UP000000539">
    <property type="component" value="Chromosome 3"/>
</dbReference>
<dbReference type="Bgee" id="ENSGALG00000025796">
    <property type="expression patterns" value="Expressed in kidney and 12 other cell types or tissues"/>
</dbReference>
<dbReference type="GO" id="GO:0005737">
    <property type="term" value="C:cytoplasm"/>
    <property type="evidence" value="ECO:0007669"/>
    <property type="project" value="UniProtKB-SubCell"/>
</dbReference>
<dbReference type="GO" id="GO:0005634">
    <property type="term" value="C:nucleus"/>
    <property type="evidence" value="ECO:0007669"/>
    <property type="project" value="UniProtKB-SubCell"/>
</dbReference>
<dbReference type="GO" id="GO:0005886">
    <property type="term" value="C:plasma membrane"/>
    <property type="evidence" value="ECO:0007669"/>
    <property type="project" value="UniProtKB-SubCell"/>
</dbReference>
<dbReference type="GO" id="GO:0010308">
    <property type="term" value="F:acireductone dioxygenase (Ni2+-requiring) activity"/>
    <property type="evidence" value="ECO:0007669"/>
    <property type="project" value="UniProtKB-UniRule"/>
</dbReference>
<dbReference type="GO" id="GO:0010309">
    <property type="term" value="F:acireductone dioxygenase [iron(II)-requiring] activity"/>
    <property type="evidence" value="ECO:0000318"/>
    <property type="project" value="GO_Central"/>
</dbReference>
<dbReference type="GO" id="GO:0005506">
    <property type="term" value="F:iron ion binding"/>
    <property type="evidence" value="ECO:0007669"/>
    <property type="project" value="UniProtKB-UniRule"/>
</dbReference>
<dbReference type="GO" id="GO:0016151">
    <property type="term" value="F:nickel cation binding"/>
    <property type="evidence" value="ECO:0007669"/>
    <property type="project" value="UniProtKB-UniRule"/>
</dbReference>
<dbReference type="GO" id="GO:0019509">
    <property type="term" value="P:L-methionine salvage from methylthioadenosine"/>
    <property type="evidence" value="ECO:0007669"/>
    <property type="project" value="UniProtKB-UniRule"/>
</dbReference>
<dbReference type="GO" id="GO:0006555">
    <property type="term" value="P:methionine metabolic process"/>
    <property type="evidence" value="ECO:0000318"/>
    <property type="project" value="GO_Central"/>
</dbReference>
<dbReference type="CDD" id="cd02232">
    <property type="entry name" value="cupin_ARD"/>
    <property type="match status" value="1"/>
</dbReference>
<dbReference type="FunFam" id="2.60.120.10:FF:000031">
    <property type="entry name" value="1,2-dihydroxy-3-keto-5-methylthiopentene dioxygenase"/>
    <property type="match status" value="1"/>
</dbReference>
<dbReference type="Gene3D" id="2.60.120.10">
    <property type="entry name" value="Jelly Rolls"/>
    <property type="match status" value="1"/>
</dbReference>
<dbReference type="HAMAP" id="MF_03154">
    <property type="entry name" value="Salvage_MtnD_euk"/>
    <property type="match status" value="1"/>
</dbReference>
<dbReference type="InterPro" id="IPR004313">
    <property type="entry name" value="ARD"/>
</dbReference>
<dbReference type="InterPro" id="IPR027496">
    <property type="entry name" value="ARD_euk"/>
</dbReference>
<dbReference type="InterPro" id="IPR014710">
    <property type="entry name" value="RmlC-like_jellyroll"/>
</dbReference>
<dbReference type="InterPro" id="IPR011051">
    <property type="entry name" value="RmlC_Cupin_sf"/>
</dbReference>
<dbReference type="PANTHER" id="PTHR23418">
    <property type="entry name" value="ACIREDUCTONE DIOXYGENASE"/>
    <property type="match status" value="1"/>
</dbReference>
<dbReference type="PANTHER" id="PTHR23418:SF0">
    <property type="entry name" value="ACIREDUCTONE DIOXYGENASE"/>
    <property type="match status" value="1"/>
</dbReference>
<dbReference type="Pfam" id="PF03079">
    <property type="entry name" value="ARD"/>
    <property type="match status" value="1"/>
</dbReference>
<dbReference type="SUPFAM" id="SSF51182">
    <property type="entry name" value="RmlC-like cupins"/>
    <property type="match status" value="1"/>
</dbReference>
<name>MTND_CHICK</name>
<accession>Q5ZL43</accession>
<gene>
    <name evidence="1" type="primary">ADI1</name>
    <name evidence="1" type="synonym">MTCBP1</name>
    <name type="ORF">RCJMB04_7o8</name>
</gene>
<feature type="chain" id="PRO_0000162945" description="Acireductone dioxygenase">
    <location>
        <begin position="1"/>
        <end position="180"/>
    </location>
</feature>
<feature type="binding site" evidence="1">
    <location>
        <position position="88"/>
    </location>
    <ligand>
        <name>Fe(2+)</name>
        <dbReference type="ChEBI" id="CHEBI:29033"/>
        <note>for iron-dependent acireductone dioxygenase activity</note>
    </ligand>
</feature>
<feature type="binding site" evidence="1">
    <location>
        <position position="88"/>
    </location>
    <ligand>
        <name>Ni(2+)</name>
        <dbReference type="ChEBI" id="CHEBI:49786"/>
        <note>for nickel-dependent acireductone dioxygenase activity</note>
    </ligand>
</feature>
<feature type="binding site" evidence="1">
    <location>
        <position position="90"/>
    </location>
    <ligand>
        <name>Fe(2+)</name>
        <dbReference type="ChEBI" id="CHEBI:29033"/>
        <note>for iron-dependent acireductone dioxygenase activity</note>
    </ligand>
</feature>
<feature type="binding site" evidence="1">
    <location>
        <position position="90"/>
    </location>
    <ligand>
        <name>Ni(2+)</name>
        <dbReference type="ChEBI" id="CHEBI:49786"/>
        <note>for nickel-dependent acireductone dioxygenase activity</note>
    </ligand>
</feature>
<feature type="binding site" evidence="1">
    <location>
        <position position="94"/>
    </location>
    <ligand>
        <name>Fe(2+)</name>
        <dbReference type="ChEBI" id="CHEBI:29033"/>
        <note>for iron-dependent acireductone dioxygenase activity</note>
    </ligand>
</feature>
<feature type="binding site" evidence="1">
    <location>
        <position position="94"/>
    </location>
    <ligand>
        <name>Ni(2+)</name>
        <dbReference type="ChEBI" id="CHEBI:49786"/>
        <note>for nickel-dependent acireductone dioxygenase activity</note>
    </ligand>
</feature>
<feature type="binding site" evidence="1">
    <location>
        <position position="133"/>
    </location>
    <ligand>
        <name>Fe(2+)</name>
        <dbReference type="ChEBI" id="CHEBI:29033"/>
        <note>for iron-dependent acireductone dioxygenase activity</note>
    </ligand>
</feature>
<feature type="binding site" evidence="1">
    <location>
        <position position="133"/>
    </location>
    <ligand>
        <name>Ni(2+)</name>
        <dbReference type="ChEBI" id="CHEBI:49786"/>
        <note>for nickel-dependent acireductone dioxygenase activity</note>
    </ligand>
</feature>
<keyword id="KW-0028">Amino-acid biosynthesis</keyword>
<keyword id="KW-1003">Cell membrane</keyword>
<keyword id="KW-0963">Cytoplasm</keyword>
<keyword id="KW-0223">Dioxygenase</keyword>
<keyword id="KW-0408">Iron</keyword>
<keyword id="KW-0472">Membrane</keyword>
<keyword id="KW-0479">Metal-binding</keyword>
<keyword id="KW-0486">Methionine biosynthesis</keyword>
<keyword id="KW-0533">Nickel</keyword>
<keyword id="KW-0539">Nucleus</keyword>
<keyword id="KW-0560">Oxidoreductase</keyword>
<keyword id="KW-1185">Reference proteome</keyword>
<proteinExistence type="evidence at transcript level"/>
<reference key="1">
    <citation type="journal article" date="2005" name="Genome Biol.">
        <title>Full-length cDNAs from chicken bursal lymphocytes to facilitate gene function analysis.</title>
        <authorList>
            <person name="Caldwell R.B."/>
            <person name="Kierzek A.M."/>
            <person name="Arakawa H."/>
            <person name="Bezzubov Y."/>
            <person name="Zaim J."/>
            <person name="Fiedler P."/>
            <person name="Kutter S."/>
            <person name="Blagodatski A."/>
            <person name="Kostovska D."/>
            <person name="Koter M."/>
            <person name="Plachy J."/>
            <person name="Carninci P."/>
            <person name="Hayashizaki Y."/>
            <person name="Buerstedde J.-M."/>
        </authorList>
    </citation>
    <scope>NUCLEOTIDE SEQUENCE [LARGE SCALE MRNA]</scope>
    <source>
        <strain>CB</strain>
        <tissue>Bursa of Fabricius</tissue>
    </source>
</reference>
<comment type="function">
    <text evidence="1">Catalyzes 2 different reactions between oxygen and the acireductone 1,2-dihydroxy-3-keto-5-methylthiopentene (DHK-MTPene) depending upon the metal bound in the active site. Fe-containing acireductone dioxygenase (Fe-ARD) produces formate and 2-keto-4-methylthiobutyrate (KMTB), the alpha-ketoacid precursor of methionine in the methionine recycle pathway. Ni-containing acireductone dioxygenase (Ni-ARD) produces methylthiopropionate, carbon monoxide and formate, and does not lie on the methionine recycle pathway.</text>
</comment>
<comment type="catalytic activity">
    <reaction evidence="1">
        <text>1,2-dihydroxy-5-(methylsulfanyl)pent-1-en-3-one + O2 = 4-methylsulfanyl-2-oxobutanoate + formate + 2 H(+)</text>
        <dbReference type="Rhea" id="RHEA:24504"/>
        <dbReference type="ChEBI" id="CHEBI:15378"/>
        <dbReference type="ChEBI" id="CHEBI:15379"/>
        <dbReference type="ChEBI" id="CHEBI:15740"/>
        <dbReference type="ChEBI" id="CHEBI:16723"/>
        <dbReference type="ChEBI" id="CHEBI:49252"/>
        <dbReference type="EC" id="1.13.11.54"/>
    </reaction>
</comment>
<comment type="catalytic activity">
    <reaction evidence="1">
        <text>1,2-dihydroxy-5-(methylsulfanyl)pent-1-en-3-one + O2 = 3-(methylsulfanyl)propanoate + CO + formate + 2 H(+)</text>
        <dbReference type="Rhea" id="RHEA:14161"/>
        <dbReference type="ChEBI" id="CHEBI:15378"/>
        <dbReference type="ChEBI" id="CHEBI:15379"/>
        <dbReference type="ChEBI" id="CHEBI:15740"/>
        <dbReference type="ChEBI" id="CHEBI:17245"/>
        <dbReference type="ChEBI" id="CHEBI:49016"/>
        <dbReference type="ChEBI" id="CHEBI:49252"/>
        <dbReference type="EC" id="1.13.11.53"/>
    </reaction>
</comment>
<comment type="cofactor">
    <cofactor evidence="1">
        <name>Fe(2+)</name>
        <dbReference type="ChEBI" id="CHEBI:29033"/>
    </cofactor>
    <cofactor evidence="1">
        <name>Ni(2+)</name>
        <dbReference type="ChEBI" id="CHEBI:49786"/>
    </cofactor>
    <text evidence="1">Binds either 1 Fe or Ni cation per monomer. Iron-binding promotes an acireductone dioxygenase reaction producing 2-keto-4-methylthiobutyrate, while nickel-binding promotes an acireductone dioxygenase reaction producing 3-(methylsulfanyl)propanoate.</text>
</comment>
<comment type="pathway">
    <text evidence="1">Amino-acid biosynthesis; L-methionine biosynthesis via salvage pathway; L-methionine from S-methyl-5-thio-alpha-D-ribose 1-phosphate: step 5/6.</text>
</comment>
<comment type="subunit">
    <text evidence="1">Monomer. Interacts with MMP14.</text>
</comment>
<comment type="subcellular location">
    <subcellularLocation>
        <location evidence="1">Cytoplasm</location>
    </subcellularLocation>
    <subcellularLocation>
        <location evidence="1">Nucleus</location>
    </subcellularLocation>
    <subcellularLocation>
        <location evidence="1">Cell membrane</location>
        <topology evidence="1">Peripheral membrane protein</topology>
        <orientation evidence="1">Cytoplasmic side</orientation>
    </subcellularLocation>
    <text evidence="1">Localizes to the plasma membrane when complexed to MMP14.</text>
</comment>
<comment type="similarity">
    <text evidence="1">Belongs to the acireductone dioxygenase (ARD) family.</text>
</comment>